<dbReference type="EMBL" id="AB008571">
    <property type="protein sequence ID" value="BAA23357.1"/>
    <property type="molecule type" value="mRNA"/>
</dbReference>
<dbReference type="RefSeq" id="NP_001399528.1">
    <property type="nucleotide sequence ID" value="NM_001412599.1"/>
</dbReference>
<dbReference type="RefSeq" id="NP_113865.1">
    <property type="nucleotide sequence ID" value="NM_031677.2"/>
</dbReference>
<dbReference type="RefSeq" id="XP_006244911.1">
    <property type="nucleotide sequence ID" value="XM_006244849.3"/>
</dbReference>
<dbReference type="RefSeq" id="XP_017452106.1">
    <property type="nucleotide sequence ID" value="XM_017596617.1"/>
</dbReference>
<dbReference type="RefSeq" id="XP_038940086.1">
    <property type="nucleotide sequence ID" value="XM_039084158.2"/>
</dbReference>
<dbReference type="SMR" id="O35115"/>
<dbReference type="BioGRID" id="248898">
    <property type="interactions" value="2"/>
</dbReference>
<dbReference type="FunCoup" id="O35115">
    <property type="interactions" value="93"/>
</dbReference>
<dbReference type="IntAct" id="O35115">
    <property type="interactions" value="1"/>
</dbReference>
<dbReference type="STRING" id="10116.ENSRNOP00000023014"/>
<dbReference type="iPTMnet" id="O35115"/>
<dbReference type="PhosphoSitePlus" id="O35115"/>
<dbReference type="PaxDb" id="10116-ENSRNOP00000023014"/>
<dbReference type="Ensembl" id="ENSRNOT00000023014.4">
    <property type="protein sequence ID" value="ENSRNOP00000023014.1"/>
    <property type="gene ID" value="ENSRNOG00000016866.4"/>
</dbReference>
<dbReference type="GeneID" id="63839"/>
<dbReference type="KEGG" id="rno:63839"/>
<dbReference type="UCSC" id="RGD:61963">
    <property type="organism name" value="rat"/>
</dbReference>
<dbReference type="AGR" id="RGD:61963"/>
<dbReference type="CTD" id="2274"/>
<dbReference type="RGD" id="61963">
    <property type="gene designation" value="Fhl2"/>
</dbReference>
<dbReference type="eggNOG" id="KOG1704">
    <property type="taxonomic scope" value="Eukaryota"/>
</dbReference>
<dbReference type="GeneTree" id="ENSGT00950000183028"/>
<dbReference type="HOGENOM" id="CLU_001357_2_0_1"/>
<dbReference type="InParanoid" id="O35115"/>
<dbReference type="OMA" id="KXTRKME"/>
<dbReference type="OrthoDB" id="13at9989"/>
<dbReference type="PhylomeDB" id="O35115"/>
<dbReference type="TreeFam" id="TF321684"/>
<dbReference type="PRO" id="PR:O35115"/>
<dbReference type="Proteomes" id="UP000002494">
    <property type="component" value="Chromosome 9"/>
</dbReference>
<dbReference type="Bgee" id="ENSRNOG00000016866">
    <property type="expression patterns" value="Expressed in heart and 19 other cell types or tissues"/>
</dbReference>
<dbReference type="GO" id="GO:0031430">
    <property type="term" value="C:M band"/>
    <property type="evidence" value="ECO:0000314"/>
    <property type="project" value="RGD"/>
</dbReference>
<dbReference type="GO" id="GO:0005634">
    <property type="term" value="C:nucleus"/>
    <property type="evidence" value="ECO:0000266"/>
    <property type="project" value="RGD"/>
</dbReference>
<dbReference type="GO" id="GO:0030018">
    <property type="term" value="C:Z disc"/>
    <property type="evidence" value="ECO:0000314"/>
    <property type="project" value="UniProtKB"/>
</dbReference>
<dbReference type="GO" id="GO:0043425">
    <property type="term" value="F:bHLH transcription factor binding"/>
    <property type="evidence" value="ECO:0000266"/>
    <property type="project" value="RGD"/>
</dbReference>
<dbReference type="GO" id="GO:0042802">
    <property type="term" value="F:identical protein binding"/>
    <property type="evidence" value="ECO:0000266"/>
    <property type="project" value="RGD"/>
</dbReference>
<dbReference type="GO" id="GO:0003714">
    <property type="term" value="F:transcription corepressor activity"/>
    <property type="evidence" value="ECO:0000266"/>
    <property type="project" value="RGD"/>
</dbReference>
<dbReference type="GO" id="GO:0008134">
    <property type="term" value="F:transcription factor binding"/>
    <property type="evidence" value="ECO:0000250"/>
    <property type="project" value="UniProtKB"/>
</dbReference>
<dbReference type="GO" id="GO:0008270">
    <property type="term" value="F:zinc ion binding"/>
    <property type="evidence" value="ECO:0007669"/>
    <property type="project" value="UniProtKB-KW"/>
</dbReference>
<dbReference type="GO" id="GO:0055014">
    <property type="term" value="P:atrial cardiac muscle cell development"/>
    <property type="evidence" value="ECO:0000266"/>
    <property type="project" value="RGD"/>
</dbReference>
<dbReference type="GO" id="GO:0060347">
    <property type="term" value="P:heart trabecula formation"/>
    <property type="evidence" value="ECO:0000266"/>
    <property type="project" value="RGD"/>
</dbReference>
<dbReference type="GO" id="GO:0043066">
    <property type="term" value="P:negative regulation of apoptotic process"/>
    <property type="evidence" value="ECO:0000250"/>
    <property type="project" value="UniProtKB"/>
</dbReference>
<dbReference type="GO" id="GO:0070885">
    <property type="term" value="P:negative regulation of calcineurin-NFAT signaling cascade"/>
    <property type="evidence" value="ECO:0000315"/>
    <property type="project" value="UniProtKB"/>
</dbReference>
<dbReference type="GO" id="GO:0000122">
    <property type="term" value="P:negative regulation of transcription by RNA polymerase II"/>
    <property type="evidence" value="ECO:0000250"/>
    <property type="project" value="UniProtKB"/>
</dbReference>
<dbReference type="GO" id="GO:0001649">
    <property type="term" value="P:osteoblast differentiation"/>
    <property type="evidence" value="ECO:0000266"/>
    <property type="project" value="RGD"/>
</dbReference>
<dbReference type="GO" id="GO:0006357">
    <property type="term" value="P:regulation of transcription by RNA polymerase II"/>
    <property type="evidence" value="ECO:0000266"/>
    <property type="project" value="RGD"/>
</dbReference>
<dbReference type="GO" id="GO:0009725">
    <property type="term" value="P:response to hormone"/>
    <property type="evidence" value="ECO:0000266"/>
    <property type="project" value="RGD"/>
</dbReference>
<dbReference type="GO" id="GO:0055015">
    <property type="term" value="P:ventricular cardiac muscle cell development"/>
    <property type="evidence" value="ECO:0000266"/>
    <property type="project" value="RGD"/>
</dbReference>
<dbReference type="CDD" id="cd09426">
    <property type="entry name" value="LIM2_FHL2"/>
    <property type="match status" value="1"/>
</dbReference>
<dbReference type="CDD" id="cd09433">
    <property type="entry name" value="LIM4_FHL2"/>
    <property type="match status" value="1"/>
</dbReference>
<dbReference type="FunFam" id="2.10.110.10:FF:000013">
    <property type="entry name" value="Four and a half LIM domains 1"/>
    <property type="match status" value="1"/>
</dbReference>
<dbReference type="FunFam" id="2.10.110.10:FF:000030">
    <property type="entry name" value="Four and a half LIM domains protein 2"/>
    <property type="match status" value="1"/>
</dbReference>
<dbReference type="FunFam" id="2.10.110.10:FF:000048">
    <property type="entry name" value="Four and a half LIM domains protein 2"/>
    <property type="match status" value="1"/>
</dbReference>
<dbReference type="FunFam" id="2.10.110.10:FF:000049">
    <property type="entry name" value="Four and a half LIM domains protein 2"/>
    <property type="match status" value="1"/>
</dbReference>
<dbReference type="Gene3D" id="2.10.110.10">
    <property type="entry name" value="Cysteine Rich Protein"/>
    <property type="match status" value="4"/>
</dbReference>
<dbReference type="InterPro" id="IPR056807">
    <property type="entry name" value="LIM_FHL1/2/3/5_N"/>
</dbReference>
<dbReference type="InterPro" id="IPR001781">
    <property type="entry name" value="Znf_LIM"/>
</dbReference>
<dbReference type="PANTHER" id="PTHR24205">
    <property type="entry name" value="FOUR AND A HALF LIM DOMAINS PROTEIN"/>
    <property type="match status" value="1"/>
</dbReference>
<dbReference type="PANTHER" id="PTHR24205:SF3">
    <property type="entry name" value="FOUR AND A HALF LIM DOMAINS PROTEIN 2"/>
    <property type="match status" value="1"/>
</dbReference>
<dbReference type="Pfam" id="PF00412">
    <property type="entry name" value="LIM"/>
    <property type="match status" value="4"/>
</dbReference>
<dbReference type="Pfam" id="PF25076">
    <property type="entry name" value="LIM_FHL2-3_N"/>
    <property type="match status" value="1"/>
</dbReference>
<dbReference type="SMART" id="SM00132">
    <property type="entry name" value="LIM"/>
    <property type="match status" value="4"/>
</dbReference>
<dbReference type="SUPFAM" id="SSF57716">
    <property type="entry name" value="Glucocorticoid receptor-like (DNA-binding domain)"/>
    <property type="match status" value="5"/>
</dbReference>
<dbReference type="PROSITE" id="PS00478">
    <property type="entry name" value="LIM_DOMAIN_1"/>
    <property type="match status" value="4"/>
</dbReference>
<dbReference type="PROSITE" id="PS50023">
    <property type="entry name" value="LIM_DOMAIN_2"/>
    <property type="match status" value="4"/>
</dbReference>
<reference key="1">
    <citation type="journal article" date="2000" name="Hum. Mol. Genet.">
        <title>Alzheimer's disease-associated presenilin 2 interacts with DRAL, an LIM-domain protein.</title>
        <authorList>
            <person name="Tanahashi H."/>
            <person name="Tabira T."/>
        </authorList>
    </citation>
    <scope>NUCLEOTIDE SEQUENCE [MRNA]</scope>
    <source>
        <strain>Wistar</strain>
        <tissue>Brain</tissue>
    </source>
</reference>
<reference key="2">
    <citation type="journal article" date="2002" name="J. Cell. Biochem.">
        <title>Interaction of the heart-specific LIM domain protein, FHL2, with DNA-binding nuclear protein, hNP220.</title>
        <authorList>
            <person name="Ng E.K.O."/>
            <person name="Chan K.K."/>
            <person name="Wong C.H."/>
            <person name="Tsui S.K.W."/>
            <person name="Ngai S.M."/>
            <person name="Lee S.M.Y."/>
            <person name="Kotaka M."/>
            <person name="Lee C.Y."/>
            <person name="Waye M.M.Y."/>
            <person name="Fung K.P."/>
        </authorList>
    </citation>
    <scope>TISSUE SPECIFICITY</scope>
</reference>
<reference key="3">
    <citation type="journal article" date="2012" name="Mol. Cell. Biol.">
        <title>FHL2 binds calcineurin and represses pathological cardiac growth.</title>
        <authorList>
            <person name="Hojayev B."/>
            <person name="Rothermel B.A."/>
            <person name="Gillette T.G."/>
            <person name="Hill J.A."/>
        </authorList>
    </citation>
    <scope>FUNCTION</scope>
    <scope>SUBCELLULAR LOCATION</scope>
</reference>
<evidence type="ECO:0000250" key="1">
    <source>
        <dbReference type="UniProtKB" id="O70433"/>
    </source>
</evidence>
<evidence type="ECO:0000250" key="2">
    <source>
        <dbReference type="UniProtKB" id="Q14192"/>
    </source>
</evidence>
<evidence type="ECO:0000255" key="3"/>
<evidence type="ECO:0000255" key="4">
    <source>
        <dbReference type="PROSITE-ProRule" id="PRU00125"/>
    </source>
</evidence>
<evidence type="ECO:0000269" key="5">
    <source>
    </source>
</evidence>
<evidence type="ECO:0000269" key="6">
    <source>
    </source>
</evidence>
<name>FHL2_RAT</name>
<comment type="function">
    <text evidence="2 6">May function as a molecular transmitter linking various signaling pathways to transcriptional regulation. Negatively regulates the transcriptional repressor E4F1 and may function in cell growth. Inhibits the transcriptional activity of FOXO1 and its apoptotic function by enhancing the interaction of FOXO1 with SIRT1 and FOXO1 deacetylation (By similarity). Negatively regulates the calcineurin/NFAT signaling pathway in cardiomyocytes (PubMed:22851699).</text>
</comment>
<comment type="subunit">
    <text evidence="1 2">Interacts with ZNF638 and TTN/titin. Interacts with E4F1. Interacts with GRB7. Interacts with SIRT1 and FOXO1. Interacts with CEFIP and calcineurin. Interacts with FOXK1.</text>
</comment>
<comment type="subcellular location">
    <subcellularLocation>
        <location evidence="2">Cytoplasm</location>
    </subcellularLocation>
    <subcellularLocation>
        <location evidence="2">Nucleus</location>
    </subcellularLocation>
    <subcellularLocation>
        <location evidence="6">Cytoplasm</location>
        <location evidence="6">Myofibril</location>
        <location evidence="6">Sarcomere</location>
        <location evidence="6">Z line</location>
    </subcellularLocation>
</comment>
<comment type="tissue specificity">
    <text evidence="5">Expressed in heart only (at protein level).</text>
</comment>
<comment type="domain">
    <text evidence="2">The third LIM zinc-binding mediates interaction with E4F1.</text>
</comment>
<accession>O35115</accession>
<proteinExistence type="evidence at protein level"/>
<keyword id="KW-0963">Cytoplasm</keyword>
<keyword id="KW-1017">Isopeptide bond</keyword>
<keyword id="KW-0440">LIM domain</keyword>
<keyword id="KW-0479">Metal-binding</keyword>
<keyword id="KW-0539">Nucleus</keyword>
<keyword id="KW-0597">Phosphoprotein</keyword>
<keyword id="KW-1185">Reference proteome</keyword>
<keyword id="KW-0677">Repeat</keyword>
<keyword id="KW-0804">Transcription</keyword>
<keyword id="KW-0805">Transcription regulation</keyword>
<keyword id="KW-0832">Ubl conjugation</keyword>
<keyword id="KW-0862">Zinc</keyword>
<keyword id="KW-0863">Zinc-finger</keyword>
<feature type="chain" id="PRO_0000075739" description="Four and a half LIM domains protein 2">
    <location>
        <begin position="1"/>
        <end position="279"/>
    </location>
</feature>
<feature type="domain" description="LIM zinc-binding 1" evidence="4">
    <location>
        <begin position="40"/>
        <end position="92"/>
    </location>
</feature>
<feature type="domain" description="LIM zinc-binding 2" evidence="4">
    <location>
        <begin position="101"/>
        <end position="153"/>
    </location>
</feature>
<feature type="domain" description="LIM zinc-binding 3" evidence="4">
    <location>
        <begin position="162"/>
        <end position="212"/>
    </location>
</feature>
<feature type="domain" description="LIM zinc-binding 4" evidence="4">
    <location>
        <begin position="221"/>
        <end position="275"/>
    </location>
</feature>
<feature type="zinc finger region" description="C4-type" evidence="3">
    <location>
        <begin position="7"/>
        <end position="31"/>
    </location>
</feature>
<feature type="modified residue" description="Phosphoserine" evidence="2">
    <location>
        <position position="238"/>
    </location>
</feature>
<feature type="cross-link" description="Glycyl lysine isopeptide (Lys-Gly) (interchain with G-Cter in SUMO2)" evidence="2">
    <location>
        <position position="78"/>
    </location>
</feature>
<feature type="cross-link" description="Glycyl lysine isopeptide (Lys-Gly) (interchain with G-Cter in SUMO2)" evidence="2">
    <location>
        <position position="167"/>
    </location>
</feature>
<feature type="cross-link" description="Glycyl lysine isopeptide (Lys-Gly) (interchain with G-Cter in SUMO2)" evidence="2">
    <location>
        <position position="220"/>
    </location>
</feature>
<protein>
    <recommendedName>
        <fullName>Four and a half LIM domains protein 2</fullName>
        <shortName>FHL-2</shortName>
    </recommendedName>
    <alternativeName>
        <fullName>LIM domain protein DRAL</fullName>
    </alternativeName>
    <alternativeName>
        <fullName>Skeletal muscle LIM-protein 3</fullName>
        <shortName>SLIM-3</shortName>
    </alternativeName>
</protein>
<sequence length="279" mass="32087">MTERFDCHHCNESLYGKKYILKEENPHCVACFEELYANTCEECGTPIGCDCKDLSYKDRHWHEGCFHCSRCGSSLVDKPFAAKEEQLLCTDCYSNEYSSKCQECKKTIMPGTRKMEYKGSSWHETCFTCQRCQQPIGTKSFIPKENQNFCVPCYEKQYALQCVQCKKPITTGGVTYRDQPWHRECFVCTACKKQLSGQRFTARDEFPYCLTCFCDLYAKKCAGCTNPISGLGGTKYISFEERQWHNDCFNCKKCSLSLVGRGFLTERDDILCPDCGKDI</sequence>
<organism>
    <name type="scientific">Rattus norvegicus</name>
    <name type="common">Rat</name>
    <dbReference type="NCBI Taxonomy" id="10116"/>
    <lineage>
        <taxon>Eukaryota</taxon>
        <taxon>Metazoa</taxon>
        <taxon>Chordata</taxon>
        <taxon>Craniata</taxon>
        <taxon>Vertebrata</taxon>
        <taxon>Euteleostomi</taxon>
        <taxon>Mammalia</taxon>
        <taxon>Eutheria</taxon>
        <taxon>Euarchontoglires</taxon>
        <taxon>Glires</taxon>
        <taxon>Rodentia</taxon>
        <taxon>Myomorpha</taxon>
        <taxon>Muroidea</taxon>
        <taxon>Muridae</taxon>
        <taxon>Murinae</taxon>
        <taxon>Rattus</taxon>
    </lineage>
</organism>
<gene>
    <name type="primary">Fhl2</name>
    <name type="synonym">Dral</name>
    <name type="synonym">Slim3</name>
</gene>